<keyword id="KW-0963">Cytoplasm</keyword>
<keyword id="KW-0275">Fatty acid biosynthesis</keyword>
<keyword id="KW-0276">Fatty acid metabolism</keyword>
<keyword id="KW-0444">Lipid biosynthesis</keyword>
<keyword id="KW-0443">Lipid metabolism</keyword>
<keyword id="KW-0460">Magnesium</keyword>
<keyword id="KW-0479">Metal-binding</keyword>
<keyword id="KW-0808">Transferase</keyword>
<accession>B0TIW1</accession>
<dbReference type="EC" id="2.7.8.7" evidence="1"/>
<dbReference type="EMBL" id="CP000931">
    <property type="protein sequence ID" value="ABZ75656.1"/>
    <property type="molecule type" value="Genomic_DNA"/>
</dbReference>
<dbReference type="RefSeq" id="WP_012276202.1">
    <property type="nucleotide sequence ID" value="NC_010334.1"/>
</dbReference>
<dbReference type="SMR" id="B0TIW1"/>
<dbReference type="STRING" id="458817.Shal_1087"/>
<dbReference type="KEGG" id="shl:Shal_1087"/>
<dbReference type="eggNOG" id="COG0736">
    <property type="taxonomic scope" value="Bacteria"/>
</dbReference>
<dbReference type="HOGENOM" id="CLU_089696_3_1_6"/>
<dbReference type="OrthoDB" id="517356at2"/>
<dbReference type="Proteomes" id="UP000001317">
    <property type="component" value="Chromosome"/>
</dbReference>
<dbReference type="GO" id="GO:0005737">
    <property type="term" value="C:cytoplasm"/>
    <property type="evidence" value="ECO:0007669"/>
    <property type="project" value="UniProtKB-SubCell"/>
</dbReference>
<dbReference type="GO" id="GO:0008897">
    <property type="term" value="F:holo-[acyl-carrier-protein] synthase activity"/>
    <property type="evidence" value="ECO:0007669"/>
    <property type="project" value="UniProtKB-UniRule"/>
</dbReference>
<dbReference type="GO" id="GO:0000287">
    <property type="term" value="F:magnesium ion binding"/>
    <property type="evidence" value="ECO:0007669"/>
    <property type="project" value="UniProtKB-UniRule"/>
</dbReference>
<dbReference type="GO" id="GO:0006633">
    <property type="term" value="P:fatty acid biosynthetic process"/>
    <property type="evidence" value="ECO:0007669"/>
    <property type="project" value="UniProtKB-UniRule"/>
</dbReference>
<dbReference type="FunFam" id="3.90.470.20:FF:000001">
    <property type="entry name" value="Holo-[acyl-carrier-protein] synthase"/>
    <property type="match status" value="1"/>
</dbReference>
<dbReference type="Gene3D" id="3.90.470.20">
    <property type="entry name" value="4'-phosphopantetheinyl transferase domain"/>
    <property type="match status" value="1"/>
</dbReference>
<dbReference type="HAMAP" id="MF_00101">
    <property type="entry name" value="AcpS"/>
    <property type="match status" value="1"/>
</dbReference>
<dbReference type="InterPro" id="IPR008278">
    <property type="entry name" value="4-PPantetheinyl_Trfase_dom"/>
</dbReference>
<dbReference type="InterPro" id="IPR037143">
    <property type="entry name" value="4-PPantetheinyl_Trfase_dom_sf"/>
</dbReference>
<dbReference type="InterPro" id="IPR002582">
    <property type="entry name" value="ACPS"/>
</dbReference>
<dbReference type="InterPro" id="IPR004568">
    <property type="entry name" value="Ppantetheine-prot_Trfase_dom"/>
</dbReference>
<dbReference type="NCBIfam" id="TIGR00516">
    <property type="entry name" value="acpS"/>
    <property type="match status" value="1"/>
</dbReference>
<dbReference type="NCBIfam" id="TIGR00556">
    <property type="entry name" value="pantethn_trn"/>
    <property type="match status" value="1"/>
</dbReference>
<dbReference type="Pfam" id="PF01648">
    <property type="entry name" value="ACPS"/>
    <property type="match status" value="1"/>
</dbReference>
<dbReference type="SUPFAM" id="SSF56214">
    <property type="entry name" value="4'-phosphopantetheinyl transferase"/>
    <property type="match status" value="1"/>
</dbReference>
<proteinExistence type="inferred from homology"/>
<sequence>MIVGLGTDIVEIARIEARIPTAGDEALLSCRLAKRVLTKTEFALFVASSQPGRYLAKRFAAKEAAAKALGTGIGRGVSFQHIEISNNTNGAPLVAFSDGAAERLAQLGGSRAHLSIADEKHYATATVILES</sequence>
<name>ACPS_SHEHH</name>
<comment type="function">
    <text evidence="1">Transfers the 4'-phosphopantetheine moiety from coenzyme A to a Ser of acyl-carrier-protein.</text>
</comment>
<comment type="catalytic activity">
    <reaction evidence="1">
        <text>apo-[ACP] + CoA = holo-[ACP] + adenosine 3',5'-bisphosphate + H(+)</text>
        <dbReference type="Rhea" id="RHEA:12068"/>
        <dbReference type="Rhea" id="RHEA-COMP:9685"/>
        <dbReference type="Rhea" id="RHEA-COMP:9690"/>
        <dbReference type="ChEBI" id="CHEBI:15378"/>
        <dbReference type="ChEBI" id="CHEBI:29999"/>
        <dbReference type="ChEBI" id="CHEBI:57287"/>
        <dbReference type="ChEBI" id="CHEBI:58343"/>
        <dbReference type="ChEBI" id="CHEBI:64479"/>
        <dbReference type="EC" id="2.7.8.7"/>
    </reaction>
</comment>
<comment type="cofactor">
    <cofactor evidence="1">
        <name>Mg(2+)</name>
        <dbReference type="ChEBI" id="CHEBI:18420"/>
    </cofactor>
</comment>
<comment type="subcellular location">
    <subcellularLocation>
        <location evidence="1">Cytoplasm</location>
    </subcellularLocation>
</comment>
<comment type="similarity">
    <text evidence="1">Belongs to the P-Pant transferase superfamily. AcpS family.</text>
</comment>
<reference key="1">
    <citation type="submission" date="2008-01" db="EMBL/GenBank/DDBJ databases">
        <title>Complete sequence of Shewanella halifaxensis HAW-EB4.</title>
        <authorList>
            <consortium name="US DOE Joint Genome Institute"/>
            <person name="Copeland A."/>
            <person name="Lucas S."/>
            <person name="Lapidus A."/>
            <person name="Glavina del Rio T."/>
            <person name="Dalin E."/>
            <person name="Tice H."/>
            <person name="Bruce D."/>
            <person name="Goodwin L."/>
            <person name="Pitluck S."/>
            <person name="Sims D."/>
            <person name="Brettin T."/>
            <person name="Detter J.C."/>
            <person name="Han C."/>
            <person name="Kuske C.R."/>
            <person name="Schmutz J."/>
            <person name="Larimer F."/>
            <person name="Land M."/>
            <person name="Hauser L."/>
            <person name="Kyrpides N."/>
            <person name="Kim E."/>
            <person name="Zhao J.-S."/>
            <person name="Richardson P."/>
        </authorList>
    </citation>
    <scope>NUCLEOTIDE SEQUENCE [LARGE SCALE GENOMIC DNA]</scope>
    <source>
        <strain>HAW-EB4</strain>
    </source>
</reference>
<gene>
    <name evidence="1" type="primary">acpS</name>
    <name type="ordered locus">Shal_1087</name>
</gene>
<feature type="chain" id="PRO_1000075661" description="Holo-[acyl-carrier-protein] synthase">
    <location>
        <begin position="1"/>
        <end position="131"/>
    </location>
</feature>
<feature type="binding site" evidence="1">
    <location>
        <position position="8"/>
    </location>
    <ligand>
        <name>Mg(2+)</name>
        <dbReference type="ChEBI" id="CHEBI:18420"/>
    </ligand>
</feature>
<feature type="binding site" evidence="1">
    <location>
        <position position="63"/>
    </location>
    <ligand>
        <name>Mg(2+)</name>
        <dbReference type="ChEBI" id="CHEBI:18420"/>
    </ligand>
</feature>
<protein>
    <recommendedName>
        <fullName evidence="1">Holo-[acyl-carrier-protein] synthase</fullName>
        <shortName evidence="1">Holo-ACP synthase</shortName>
        <ecNumber evidence="1">2.7.8.7</ecNumber>
    </recommendedName>
    <alternativeName>
        <fullName evidence="1">4'-phosphopantetheinyl transferase AcpS</fullName>
    </alternativeName>
</protein>
<evidence type="ECO:0000255" key="1">
    <source>
        <dbReference type="HAMAP-Rule" id="MF_00101"/>
    </source>
</evidence>
<organism>
    <name type="scientific">Shewanella halifaxensis (strain HAW-EB4)</name>
    <dbReference type="NCBI Taxonomy" id="458817"/>
    <lineage>
        <taxon>Bacteria</taxon>
        <taxon>Pseudomonadati</taxon>
        <taxon>Pseudomonadota</taxon>
        <taxon>Gammaproteobacteria</taxon>
        <taxon>Alteromonadales</taxon>
        <taxon>Shewanellaceae</taxon>
        <taxon>Shewanella</taxon>
    </lineage>
</organism>